<proteinExistence type="inferred from homology"/>
<evidence type="ECO:0000255" key="1">
    <source>
        <dbReference type="HAMAP-Rule" id="MF_00225"/>
    </source>
</evidence>
<reference key="1">
    <citation type="journal article" date="2010" name="J. Bacteriol.">
        <title>Whole genome sequences of two Xylella fastidiosa strains (M12 and M23) causing almond leaf scorch disease in California.</title>
        <authorList>
            <person name="Chen J."/>
            <person name="Xie G."/>
            <person name="Han S."/>
            <person name="Chertkov O."/>
            <person name="Sims D."/>
            <person name="Civerolo E.L."/>
        </authorList>
    </citation>
    <scope>NUCLEOTIDE SEQUENCE [LARGE SCALE GENOMIC DNA]</scope>
    <source>
        <strain>M23</strain>
    </source>
</reference>
<protein>
    <recommendedName>
        <fullName evidence="1">Dihydroorotate dehydrogenase (quinone)</fullName>
        <ecNumber evidence="1">1.3.5.2</ecNumber>
    </recommendedName>
    <alternativeName>
        <fullName evidence="1">DHOdehase</fullName>
        <shortName evidence="1">DHOD</shortName>
        <shortName evidence="1">DHODase</shortName>
    </alternativeName>
    <alternativeName>
        <fullName evidence="1">Dihydroorotate oxidase</fullName>
    </alternativeName>
</protein>
<name>PYRD_XYLF2</name>
<accession>B2I9T5</accession>
<comment type="function">
    <text evidence="1">Catalyzes the conversion of dihydroorotate to orotate with quinone as electron acceptor.</text>
</comment>
<comment type="catalytic activity">
    <reaction evidence="1">
        <text>(S)-dihydroorotate + a quinone = orotate + a quinol</text>
        <dbReference type="Rhea" id="RHEA:30187"/>
        <dbReference type="ChEBI" id="CHEBI:24646"/>
        <dbReference type="ChEBI" id="CHEBI:30839"/>
        <dbReference type="ChEBI" id="CHEBI:30864"/>
        <dbReference type="ChEBI" id="CHEBI:132124"/>
        <dbReference type="EC" id="1.3.5.2"/>
    </reaction>
</comment>
<comment type="cofactor">
    <cofactor evidence="1">
        <name>FMN</name>
        <dbReference type="ChEBI" id="CHEBI:58210"/>
    </cofactor>
    <text evidence="1">Binds 1 FMN per subunit.</text>
</comment>
<comment type="pathway">
    <text evidence="1">Pyrimidine metabolism; UMP biosynthesis via de novo pathway; orotate from (S)-dihydroorotate (quinone route): step 1/1.</text>
</comment>
<comment type="subunit">
    <text evidence="1">Monomer.</text>
</comment>
<comment type="subcellular location">
    <subcellularLocation>
        <location evidence="1">Cell membrane</location>
        <topology evidence="1">Peripheral membrane protein</topology>
    </subcellularLocation>
</comment>
<comment type="similarity">
    <text evidence="1">Belongs to the dihydroorotate dehydrogenase family. Type 2 subfamily.</text>
</comment>
<dbReference type="EC" id="1.3.5.2" evidence="1"/>
<dbReference type="EMBL" id="CP001011">
    <property type="protein sequence ID" value="ACB93456.1"/>
    <property type="molecule type" value="Genomic_DNA"/>
</dbReference>
<dbReference type="RefSeq" id="WP_004090333.1">
    <property type="nucleotide sequence ID" value="NC_010577.1"/>
</dbReference>
<dbReference type="SMR" id="B2I9T5"/>
<dbReference type="KEGG" id="xfn:XfasM23_2058"/>
<dbReference type="HOGENOM" id="CLU_013640_2_0_6"/>
<dbReference type="UniPathway" id="UPA00070">
    <property type="reaction ID" value="UER00946"/>
</dbReference>
<dbReference type="Proteomes" id="UP000001698">
    <property type="component" value="Chromosome"/>
</dbReference>
<dbReference type="GO" id="GO:0005737">
    <property type="term" value="C:cytoplasm"/>
    <property type="evidence" value="ECO:0007669"/>
    <property type="project" value="InterPro"/>
</dbReference>
<dbReference type="GO" id="GO:0005886">
    <property type="term" value="C:plasma membrane"/>
    <property type="evidence" value="ECO:0007669"/>
    <property type="project" value="UniProtKB-SubCell"/>
</dbReference>
<dbReference type="GO" id="GO:0106430">
    <property type="term" value="F:dihydroorotate dehydrogenase (quinone) activity"/>
    <property type="evidence" value="ECO:0007669"/>
    <property type="project" value="UniProtKB-EC"/>
</dbReference>
<dbReference type="GO" id="GO:0006207">
    <property type="term" value="P:'de novo' pyrimidine nucleobase biosynthetic process"/>
    <property type="evidence" value="ECO:0007669"/>
    <property type="project" value="InterPro"/>
</dbReference>
<dbReference type="GO" id="GO:0044205">
    <property type="term" value="P:'de novo' UMP biosynthetic process"/>
    <property type="evidence" value="ECO:0007669"/>
    <property type="project" value="UniProtKB-UniRule"/>
</dbReference>
<dbReference type="CDD" id="cd04738">
    <property type="entry name" value="DHOD_2_like"/>
    <property type="match status" value="1"/>
</dbReference>
<dbReference type="Gene3D" id="3.20.20.70">
    <property type="entry name" value="Aldolase class I"/>
    <property type="match status" value="1"/>
</dbReference>
<dbReference type="HAMAP" id="MF_00225">
    <property type="entry name" value="DHO_dh_type2"/>
    <property type="match status" value="1"/>
</dbReference>
<dbReference type="InterPro" id="IPR013785">
    <property type="entry name" value="Aldolase_TIM"/>
</dbReference>
<dbReference type="InterPro" id="IPR050074">
    <property type="entry name" value="DHO_dehydrogenase"/>
</dbReference>
<dbReference type="InterPro" id="IPR012135">
    <property type="entry name" value="Dihydroorotate_DH_1_2"/>
</dbReference>
<dbReference type="InterPro" id="IPR005719">
    <property type="entry name" value="Dihydroorotate_DH_2"/>
</dbReference>
<dbReference type="InterPro" id="IPR005720">
    <property type="entry name" value="Dihydroorotate_DH_cat"/>
</dbReference>
<dbReference type="InterPro" id="IPR001295">
    <property type="entry name" value="Dihydroorotate_DH_CS"/>
</dbReference>
<dbReference type="NCBIfam" id="NF003645">
    <property type="entry name" value="PRK05286.1-2"/>
    <property type="match status" value="1"/>
</dbReference>
<dbReference type="NCBIfam" id="NF003646">
    <property type="entry name" value="PRK05286.1-4"/>
    <property type="match status" value="1"/>
</dbReference>
<dbReference type="NCBIfam" id="NF003652">
    <property type="entry name" value="PRK05286.2-5"/>
    <property type="match status" value="1"/>
</dbReference>
<dbReference type="NCBIfam" id="TIGR01036">
    <property type="entry name" value="pyrD_sub2"/>
    <property type="match status" value="1"/>
</dbReference>
<dbReference type="PANTHER" id="PTHR48109:SF4">
    <property type="entry name" value="DIHYDROOROTATE DEHYDROGENASE (QUINONE), MITOCHONDRIAL"/>
    <property type="match status" value="1"/>
</dbReference>
<dbReference type="PANTHER" id="PTHR48109">
    <property type="entry name" value="DIHYDROOROTATE DEHYDROGENASE (QUINONE), MITOCHONDRIAL-RELATED"/>
    <property type="match status" value="1"/>
</dbReference>
<dbReference type="Pfam" id="PF01180">
    <property type="entry name" value="DHO_dh"/>
    <property type="match status" value="1"/>
</dbReference>
<dbReference type="PIRSF" id="PIRSF000164">
    <property type="entry name" value="DHO_oxidase"/>
    <property type="match status" value="1"/>
</dbReference>
<dbReference type="SUPFAM" id="SSF51395">
    <property type="entry name" value="FMN-linked oxidoreductases"/>
    <property type="match status" value="1"/>
</dbReference>
<dbReference type="PROSITE" id="PS00911">
    <property type="entry name" value="DHODEHASE_1"/>
    <property type="match status" value="1"/>
</dbReference>
<sequence length="351" mass="37877">MYSLFRPLLFTCDAERAHDISLRTLDIAYHSGALPLLTRHTRPLPTTAFGLNFPNPVGLAAGLDKNGTHIDALFALGFGFIEIGTTTPRPQAGNPKPRLFRLTQQQAVINRMGFNNLGVDALVRNVAGARRRNGPLGINIGKNKDTPNEQASNDYRYCLERVYALADYVTINLSSPNTAGLRALQEEQTLRRLIGELRETQETLAAKHGRHVPMLIKMAPDLSDSDIDAAARVLNEMSVDGVIATNTTVTRPLLRQHPLASEAGGLSGAPLLGQSTLVLRRLRTHLPETIDLIGVGGICCGADAGAKMAAGASLVQCYTGLIFKGPQLVGECVEAIRRRLEASSSGRENTQ</sequence>
<organism>
    <name type="scientific">Xylella fastidiosa (strain M23)</name>
    <dbReference type="NCBI Taxonomy" id="405441"/>
    <lineage>
        <taxon>Bacteria</taxon>
        <taxon>Pseudomonadati</taxon>
        <taxon>Pseudomonadota</taxon>
        <taxon>Gammaproteobacteria</taxon>
        <taxon>Lysobacterales</taxon>
        <taxon>Lysobacteraceae</taxon>
        <taxon>Xylella</taxon>
    </lineage>
</organism>
<keyword id="KW-1003">Cell membrane</keyword>
<keyword id="KW-0285">Flavoprotein</keyword>
<keyword id="KW-0288">FMN</keyword>
<keyword id="KW-0472">Membrane</keyword>
<keyword id="KW-0560">Oxidoreductase</keyword>
<keyword id="KW-0665">Pyrimidine biosynthesis</keyword>
<feature type="chain" id="PRO_1000100298" description="Dihydroorotate dehydrogenase (quinone)">
    <location>
        <begin position="1"/>
        <end position="351"/>
    </location>
</feature>
<feature type="active site" description="Nucleophile" evidence="1">
    <location>
        <position position="175"/>
    </location>
</feature>
<feature type="binding site" evidence="1">
    <location>
        <begin position="61"/>
        <end position="65"/>
    </location>
    <ligand>
        <name>FMN</name>
        <dbReference type="ChEBI" id="CHEBI:58210"/>
    </ligand>
</feature>
<feature type="binding site" evidence="1">
    <location>
        <position position="65"/>
    </location>
    <ligand>
        <name>substrate</name>
    </ligand>
</feature>
<feature type="binding site" evidence="1">
    <location>
        <position position="85"/>
    </location>
    <ligand>
        <name>FMN</name>
        <dbReference type="ChEBI" id="CHEBI:58210"/>
    </ligand>
</feature>
<feature type="binding site" evidence="1">
    <location>
        <begin position="110"/>
        <end position="114"/>
    </location>
    <ligand>
        <name>substrate</name>
    </ligand>
</feature>
<feature type="binding site" evidence="1">
    <location>
        <position position="139"/>
    </location>
    <ligand>
        <name>FMN</name>
        <dbReference type="ChEBI" id="CHEBI:58210"/>
    </ligand>
</feature>
<feature type="binding site" evidence="1">
    <location>
        <position position="172"/>
    </location>
    <ligand>
        <name>FMN</name>
        <dbReference type="ChEBI" id="CHEBI:58210"/>
    </ligand>
</feature>
<feature type="binding site" evidence="1">
    <location>
        <position position="172"/>
    </location>
    <ligand>
        <name>substrate</name>
    </ligand>
</feature>
<feature type="binding site" evidence="1">
    <location>
        <position position="177"/>
    </location>
    <ligand>
        <name>substrate</name>
    </ligand>
</feature>
<feature type="binding site" evidence="1">
    <location>
        <position position="217"/>
    </location>
    <ligand>
        <name>FMN</name>
        <dbReference type="ChEBI" id="CHEBI:58210"/>
    </ligand>
</feature>
<feature type="binding site" evidence="1">
    <location>
        <position position="245"/>
    </location>
    <ligand>
        <name>FMN</name>
        <dbReference type="ChEBI" id="CHEBI:58210"/>
    </ligand>
</feature>
<feature type="binding site" evidence="1">
    <location>
        <begin position="246"/>
        <end position="247"/>
    </location>
    <ligand>
        <name>substrate</name>
    </ligand>
</feature>
<feature type="binding site" evidence="1">
    <location>
        <position position="268"/>
    </location>
    <ligand>
        <name>FMN</name>
        <dbReference type="ChEBI" id="CHEBI:58210"/>
    </ligand>
</feature>
<feature type="binding site" evidence="1">
    <location>
        <position position="297"/>
    </location>
    <ligand>
        <name>FMN</name>
        <dbReference type="ChEBI" id="CHEBI:58210"/>
    </ligand>
</feature>
<feature type="binding site" evidence="1">
    <location>
        <begin position="318"/>
        <end position="319"/>
    </location>
    <ligand>
        <name>FMN</name>
        <dbReference type="ChEBI" id="CHEBI:58210"/>
    </ligand>
</feature>
<gene>
    <name evidence="1" type="primary">pyrD</name>
    <name type="ordered locus">XfasM23_2058</name>
</gene>